<sequence length="284" mass="32035">MLSKQIPLGIYEKALPAGECWLERLQLAKTLGFDFVEMSVDETDDRLSRLDWSREQRLALVNAIVETGVRVPSMCLSAHRRFPLGSEDDAVRAQGLEIMRKAIQFAQDVGIRVIQLAGYDVYYQEANNETRRRFRDGLKESVEMASRAQVTLAMEIMDYPLMNSISKALGYAHYLNNPWFQLYPDIGNLSAWDNDVQMELQAGIGHIVAVHVKDTKPGVFKNVPFGEGVVDFERCFETLKQSGYCGPYLIEMWSETAEDPAAEVAKARDWVKARMAKAGMVEAA</sequence>
<name>ULAE_ESCF3</name>
<dbReference type="EC" id="5.1.3.22" evidence="1"/>
<dbReference type="EMBL" id="CU928158">
    <property type="protein sequence ID" value="CAQ91669.1"/>
    <property type="molecule type" value="Genomic_DNA"/>
</dbReference>
<dbReference type="RefSeq" id="WP_000949498.1">
    <property type="nucleotide sequence ID" value="NC_011740.1"/>
</dbReference>
<dbReference type="SMR" id="B7LLX9"/>
<dbReference type="GeneID" id="86861409"/>
<dbReference type="KEGG" id="efe:EFER_4250"/>
<dbReference type="HOGENOM" id="CLU_082738_0_0_6"/>
<dbReference type="OrthoDB" id="3185623at2"/>
<dbReference type="UniPathway" id="UPA00263">
    <property type="reaction ID" value="UER00379"/>
</dbReference>
<dbReference type="Proteomes" id="UP000000745">
    <property type="component" value="Chromosome"/>
</dbReference>
<dbReference type="GO" id="GO:0016861">
    <property type="term" value="F:intramolecular oxidoreductase activity, interconverting aldoses and ketoses"/>
    <property type="evidence" value="ECO:0007669"/>
    <property type="project" value="InterPro"/>
</dbReference>
<dbReference type="GO" id="GO:0034015">
    <property type="term" value="F:L-ribulose-5-phosphate 3-epimerase activity"/>
    <property type="evidence" value="ECO:0007669"/>
    <property type="project" value="UniProtKB-UniRule"/>
</dbReference>
<dbReference type="GO" id="GO:0019854">
    <property type="term" value="P:L-ascorbic acid catabolic process"/>
    <property type="evidence" value="ECO:0007669"/>
    <property type="project" value="UniProtKB-UniRule"/>
</dbReference>
<dbReference type="FunFam" id="3.20.20.150:FF:000003">
    <property type="entry name" value="L-ribulose-5-phosphate 3-epimerase UlaE"/>
    <property type="match status" value="1"/>
</dbReference>
<dbReference type="Gene3D" id="3.20.20.150">
    <property type="entry name" value="Divalent-metal-dependent TIM barrel enzymes"/>
    <property type="match status" value="1"/>
</dbReference>
<dbReference type="HAMAP" id="MF_01951">
    <property type="entry name" value="UlaE"/>
    <property type="match status" value="1"/>
</dbReference>
<dbReference type="InterPro" id="IPR004560">
    <property type="entry name" value="L-Ru-5P_3-Epase"/>
</dbReference>
<dbReference type="InterPro" id="IPR023492">
    <property type="entry name" value="L-Ru-5P_3-Epase_Enterobacteria"/>
</dbReference>
<dbReference type="InterPro" id="IPR050417">
    <property type="entry name" value="Sugar_Epim/Isomerase"/>
</dbReference>
<dbReference type="InterPro" id="IPR036237">
    <property type="entry name" value="Xyl_isomerase-like_sf"/>
</dbReference>
<dbReference type="InterPro" id="IPR013022">
    <property type="entry name" value="Xyl_isomerase-like_TIM-brl"/>
</dbReference>
<dbReference type="NCBIfam" id="TIGR00542">
    <property type="entry name" value="hxl6Piso_put"/>
    <property type="match status" value="1"/>
</dbReference>
<dbReference type="NCBIfam" id="NF009688">
    <property type="entry name" value="PRK13209.1"/>
    <property type="match status" value="1"/>
</dbReference>
<dbReference type="NCBIfam" id="NF009689">
    <property type="entry name" value="PRK13210.1"/>
    <property type="match status" value="1"/>
</dbReference>
<dbReference type="PANTHER" id="PTHR43489">
    <property type="entry name" value="ISOMERASE"/>
    <property type="match status" value="1"/>
</dbReference>
<dbReference type="PANTHER" id="PTHR43489:SF8">
    <property type="entry name" value="L-RIBULOSE-5-PHOSPHATE 3-EPIMERASE ULAE"/>
    <property type="match status" value="1"/>
</dbReference>
<dbReference type="Pfam" id="PF01261">
    <property type="entry name" value="AP_endonuc_2"/>
    <property type="match status" value="1"/>
</dbReference>
<dbReference type="SUPFAM" id="SSF51658">
    <property type="entry name" value="Xylose isomerase-like"/>
    <property type="match status" value="1"/>
</dbReference>
<keyword id="KW-0413">Isomerase</keyword>
<comment type="function">
    <text evidence="1">Catalyzes the isomerization of L-xylulose-5-phosphate to L-ribulose-5-phosphate. Is involved in the anaerobic L-ascorbate utilization.</text>
</comment>
<comment type="catalytic activity">
    <reaction evidence="1">
        <text>L-ribulose 5-phosphate = L-xylulose 5-phosphate</text>
        <dbReference type="Rhea" id="RHEA:18497"/>
        <dbReference type="ChEBI" id="CHEBI:57829"/>
        <dbReference type="ChEBI" id="CHEBI:58226"/>
        <dbReference type="EC" id="5.1.3.22"/>
    </reaction>
</comment>
<comment type="pathway">
    <text evidence="1">Cofactor degradation; L-ascorbate degradation; D-xylulose 5-phosphate from L-ascorbate: step 3/4.</text>
</comment>
<comment type="induction">
    <text evidence="1">Induced by L-ascorbate. Repressed by UlaR.</text>
</comment>
<comment type="similarity">
    <text evidence="1">Belongs to the L-ribulose-5-phosphate 3-epimerase family.</text>
</comment>
<organism>
    <name type="scientific">Escherichia fergusonii (strain ATCC 35469 / DSM 13698 / CCUG 18766 / IAM 14443 / JCM 21226 / LMG 7866 / NBRC 102419 / NCTC 12128 / CDC 0568-73)</name>
    <dbReference type="NCBI Taxonomy" id="585054"/>
    <lineage>
        <taxon>Bacteria</taxon>
        <taxon>Pseudomonadati</taxon>
        <taxon>Pseudomonadota</taxon>
        <taxon>Gammaproteobacteria</taxon>
        <taxon>Enterobacterales</taxon>
        <taxon>Enterobacteriaceae</taxon>
        <taxon>Escherichia</taxon>
    </lineage>
</organism>
<reference key="1">
    <citation type="journal article" date="2009" name="PLoS Genet.">
        <title>Organised genome dynamics in the Escherichia coli species results in highly diverse adaptive paths.</title>
        <authorList>
            <person name="Touchon M."/>
            <person name="Hoede C."/>
            <person name="Tenaillon O."/>
            <person name="Barbe V."/>
            <person name="Baeriswyl S."/>
            <person name="Bidet P."/>
            <person name="Bingen E."/>
            <person name="Bonacorsi S."/>
            <person name="Bouchier C."/>
            <person name="Bouvet O."/>
            <person name="Calteau A."/>
            <person name="Chiapello H."/>
            <person name="Clermont O."/>
            <person name="Cruveiller S."/>
            <person name="Danchin A."/>
            <person name="Diard M."/>
            <person name="Dossat C."/>
            <person name="Karoui M.E."/>
            <person name="Frapy E."/>
            <person name="Garry L."/>
            <person name="Ghigo J.M."/>
            <person name="Gilles A.M."/>
            <person name="Johnson J."/>
            <person name="Le Bouguenec C."/>
            <person name="Lescat M."/>
            <person name="Mangenot S."/>
            <person name="Martinez-Jehanne V."/>
            <person name="Matic I."/>
            <person name="Nassif X."/>
            <person name="Oztas S."/>
            <person name="Petit M.A."/>
            <person name="Pichon C."/>
            <person name="Rouy Z."/>
            <person name="Ruf C.S."/>
            <person name="Schneider D."/>
            <person name="Tourret J."/>
            <person name="Vacherie B."/>
            <person name="Vallenet D."/>
            <person name="Medigue C."/>
            <person name="Rocha E.P.C."/>
            <person name="Denamur E."/>
        </authorList>
    </citation>
    <scope>NUCLEOTIDE SEQUENCE [LARGE SCALE GENOMIC DNA]</scope>
    <source>
        <strain>ATCC 35469 / DSM 13698 / BCRC 15582 / CCUG 18766 / IAM 14443 / JCM 21226 / LMG 7866 / NBRC 102419 / NCTC 12128 / CDC 0568-73</strain>
    </source>
</reference>
<evidence type="ECO:0000255" key="1">
    <source>
        <dbReference type="HAMAP-Rule" id="MF_01951"/>
    </source>
</evidence>
<feature type="chain" id="PRO_1000188830" description="L-ribulose-5-phosphate 3-epimerase UlaE">
    <location>
        <begin position="1"/>
        <end position="284"/>
    </location>
</feature>
<proteinExistence type="inferred from homology"/>
<accession>B7LLX9</accession>
<gene>
    <name evidence="1" type="primary">ulaE</name>
    <name type="ordered locus">EFER_4250</name>
</gene>
<protein>
    <recommendedName>
        <fullName evidence="1">L-ribulose-5-phosphate 3-epimerase UlaE</fullName>
        <ecNumber evidence="1">5.1.3.22</ecNumber>
    </recommendedName>
    <alternativeName>
        <fullName evidence="1">L-ascorbate utilization protein E</fullName>
    </alternativeName>
    <alternativeName>
        <fullName evidence="1">L-xylulose-5-phosphate 3-epimerase</fullName>
    </alternativeName>
</protein>